<protein>
    <recommendedName>
        <fullName evidence="1">Putative regulatory protein AM1_5498</fullName>
    </recommendedName>
</protein>
<proteinExistence type="inferred from homology"/>
<accession>B0CD11</accession>
<keyword id="KW-1185">Reference proteome</keyword>
<gene>
    <name type="ordered locus">AM1_5498</name>
</gene>
<comment type="similarity">
    <text evidence="1">Belongs to the RemA family.</text>
</comment>
<dbReference type="EMBL" id="CP000828">
    <property type="protein sequence ID" value="ABW30453.1"/>
    <property type="molecule type" value="Genomic_DNA"/>
</dbReference>
<dbReference type="SMR" id="B0CD11"/>
<dbReference type="STRING" id="329726.AM1_5498"/>
<dbReference type="KEGG" id="amr:AM1_5498"/>
<dbReference type="eggNOG" id="COG2052">
    <property type="taxonomic scope" value="Bacteria"/>
</dbReference>
<dbReference type="HOGENOM" id="CLU_165326_0_0_3"/>
<dbReference type="OrthoDB" id="5432174at2"/>
<dbReference type="Proteomes" id="UP000000268">
    <property type="component" value="Chromosome"/>
</dbReference>
<dbReference type="HAMAP" id="MF_01503">
    <property type="entry name" value="RemA"/>
    <property type="match status" value="1"/>
</dbReference>
<dbReference type="InterPro" id="IPR007169">
    <property type="entry name" value="RemA-like"/>
</dbReference>
<dbReference type="NCBIfam" id="NF046064">
    <property type="entry name" value="MtxBflmRegRemA"/>
    <property type="match status" value="1"/>
</dbReference>
<dbReference type="NCBIfam" id="NF003315">
    <property type="entry name" value="PRK04323.1"/>
    <property type="match status" value="1"/>
</dbReference>
<dbReference type="PANTHER" id="PTHR38449:SF1">
    <property type="entry name" value="REGULATORY PROTEIN SSL2874-RELATED"/>
    <property type="match status" value="1"/>
</dbReference>
<dbReference type="PANTHER" id="PTHR38449">
    <property type="entry name" value="REGULATORY PROTEIN TM_1690-RELATED"/>
    <property type="match status" value="1"/>
</dbReference>
<dbReference type="Pfam" id="PF04025">
    <property type="entry name" value="RemA-like"/>
    <property type="match status" value="1"/>
</dbReference>
<feature type="chain" id="PRO_1000087508" description="Putative regulatory protein AM1_5498">
    <location>
        <begin position="1"/>
        <end position="88"/>
    </location>
</feature>
<name>Y5498_ACAM1</name>
<sequence>MDIKLINIGFGNIVSGNRVISIVSPESAPIKRIISEARDRAQLIDATYGRRTRAVIVTDSGHVVLSAIQPETVAHRFMSNKDTKDSDK</sequence>
<reference key="1">
    <citation type="journal article" date="2008" name="Proc. Natl. Acad. Sci. U.S.A.">
        <title>Niche adaptation and genome expansion in the chlorophyll d-producing cyanobacterium Acaryochloris marina.</title>
        <authorList>
            <person name="Swingley W.D."/>
            <person name="Chen M."/>
            <person name="Cheung P.C."/>
            <person name="Conrad A.L."/>
            <person name="Dejesa L.C."/>
            <person name="Hao J."/>
            <person name="Honchak B.M."/>
            <person name="Karbach L.E."/>
            <person name="Kurdoglu A."/>
            <person name="Lahiri S."/>
            <person name="Mastrian S.D."/>
            <person name="Miyashita H."/>
            <person name="Page L."/>
            <person name="Ramakrishna P."/>
            <person name="Satoh S."/>
            <person name="Sattley W.M."/>
            <person name="Shimada Y."/>
            <person name="Taylor H.L."/>
            <person name="Tomo T."/>
            <person name="Tsuchiya T."/>
            <person name="Wang Z.T."/>
            <person name="Raymond J."/>
            <person name="Mimuro M."/>
            <person name="Blankenship R.E."/>
            <person name="Touchman J.W."/>
        </authorList>
    </citation>
    <scope>NUCLEOTIDE SEQUENCE [LARGE SCALE GENOMIC DNA]</scope>
    <source>
        <strain>MBIC 11017</strain>
    </source>
</reference>
<organism>
    <name type="scientific">Acaryochloris marina (strain MBIC 11017)</name>
    <dbReference type="NCBI Taxonomy" id="329726"/>
    <lineage>
        <taxon>Bacteria</taxon>
        <taxon>Bacillati</taxon>
        <taxon>Cyanobacteriota</taxon>
        <taxon>Cyanophyceae</taxon>
        <taxon>Acaryochloridales</taxon>
        <taxon>Acaryochloridaceae</taxon>
        <taxon>Acaryochloris</taxon>
    </lineage>
</organism>
<evidence type="ECO:0000255" key="1">
    <source>
        <dbReference type="HAMAP-Rule" id="MF_01503"/>
    </source>
</evidence>